<comment type="function">
    <text evidence="4 5 6 7 8 9">Transcriptional repressor involved in the inhibition of plant growth under abiotic stress conditions. Can repress the expression of various genes, including osmotic stress and abscisic acid-repressive genes and auxin-inducible genes, by binding to their promoter regions in a DNA sequence-specific manner. Acts as a negative regulator of abscisic acid (ABA) signaling during seed germination. Probably involved in jasmonate (JA) early signaling response. May regulate the expression of the JA biosynthesis gene LOX3 and control the expression of TIFY10A/JAZ1, a key repressor in the JA signaling cascade. May act as a positive regulator of leaf senescence. Has been identified as a suppressor of the deficiency of yeast snf4 mutant to grow on non-fermentable carbon source.</text>
</comment>
<comment type="subcellular location">
    <subcellularLocation>
        <location evidence="5 8">Nucleus</location>
    </subcellularLocation>
</comment>
<comment type="tissue specificity">
    <text evidence="3 5 7">Expressed in roots, radicles, cotyledons, hypocotyls, leaf veins, stems, sepals, petals, stamens, placenta, funiculi and maturated seeds.</text>
</comment>
<comment type="induction">
    <text evidence="3 5 7 8">By abscisic acid (ABA), ethylene, salt, cold, dehydration and the monovalent and divalent cations Li(+), Na(+), K(+), Cs(+), Ca(2+) and Mg(2+).</text>
</comment>
<comment type="disruption phenotype">
    <text evidence="7 9">Delayed senescence and hypersensitivity to ABA during seed germination.</text>
</comment>
<comment type="miscellaneous">
    <text evidence="10">Plants overexpressing AZF2 have increased sensitivity to salt stress and barely survive under high salt conditions.</text>
</comment>
<organism>
    <name type="scientific">Arabidopsis thaliana</name>
    <name type="common">Mouse-ear cress</name>
    <dbReference type="NCBI Taxonomy" id="3702"/>
    <lineage>
        <taxon>Eukaryota</taxon>
        <taxon>Viridiplantae</taxon>
        <taxon>Streptophyta</taxon>
        <taxon>Embryophyta</taxon>
        <taxon>Tracheophyta</taxon>
        <taxon>Spermatophyta</taxon>
        <taxon>Magnoliopsida</taxon>
        <taxon>eudicotyledons</taxon>
        <taxon>Gunneridae</taxon>
        <taxon>Pentapetalae</taxon>
        <taxon>rosids</taxon>
        <taxon>malvids</taxon>
        <taxon>Brassicales</taxon>
        <taxon>Brassicaceae</taxon>
        <taxon>Camelineae</taxon>
        <taxon>Arabidopsis</taxon>
    </lineage>
</organism>
<proteinExistence type="evidence at transcript level"/>
<feature type="chain" id="PRO_0000421827" description="Zinc finger protein AZF2">
    <location>
        <begin position="1"/>
        <end position="273"/>
    </location>
</feature>
<feature type="zinc finger region" description="C2H2-type 1" evidence="1">
    <location>
        <begin position="106"/>
        <end position="128"/>
    </location>
</feature>
<feature type="zinc finger region" description="C2H2-type 2" evidence="1">
    <location>
        <begin position="165"/>
        <end position="187"/>
    </location>
</feature>
<feature type="region of interest" description="Disordered" evidence="2">
    <location>
        <begin position="33"/>
        <end position="64"/>
    </location>
</feature>
<feature type="region of interest" description="Disordered" evidence="2">
    <location>
        <begin position="195"/>
        <end position="215"/>
    </location>
</feature>
<feature type="compositionally biased region" description="Basic residues" evidence="2">
    <location>
        <begin position="34"/>
        <end position="43"/>
    </location>
</feature>
<feature type="compositionally biased region" description="Low complexity" evidence="2">
    <location>
        <begin position="44"/>
        <end position="54"/>
    </location>
</feature>
<feature type="compositionally biased region" description="Low complexity" evidence="2">
    <location>
        <begin position="201"/>
        <end position="213"/>
    </location>
</feature>
<accession>Q9SSW2</accession>
<protein>
    <recommendedName>
        <fullName>Zinc finger protein AZF2</fullName>
    </recommendedName>
    <alternativeName>
        <fullName>Zinc-finger protein 2</fullName>
    </alternativeName>
</protein>
<evidence type="ECO:0000255" key="1">
    <source>
        <dbReference type="PROSITE-ProRule" id="PRU00042"/>
    </source>
</evidence>
<evidence type="ECO:0000256" key="2">
    <source>
        <dbReference type="SAM" id="MobiDB-lite"/>
    </source>
</evidence>
<evidence type="ECO:0000269" key="3">
    <source>
    </source>
</evidence>
<evidence type="ECO:0000269" key="4">
    <source>
    </source>
</evidence>
<evidence type="ECO:0000269" key="5">
    <source>
    </source>
</evidence>
<evidence type="ECO:0000269" key="6">
    <source>
    </source>
</evidence>
<evidence type="ECO:0000269" key="7">
    <source>
    </source>
</evidence>
<evidence type="ECO:0000269" key="8">
    <source>
    </source>
</evidence>
<evidence type="ECO:0000269" key="9">
    <source>
    </source>
</evidence>
<evidence type="ECO:0000305" key="10">
    <source>
    </source>
</evidence>
<reference key="1">
    <citation type="journal article" date="2000" name="Gene">
        <title>Expression of a subset of the Arabidopsis Cys(2)/His(2)-type zinc-finger protein gene family under water stress.</title>
        <authorList>
            <person name="Sakamoto H."/>
            <person name="Araki T."/>
            <person name="Meshi T."/>
            <person name="Iwabuchi M."/>
        </authorList>
    </citation>
    <scope>NUCLEOTIDE SEQUENCE [GENOMIC DNA]</scope>
    <scope>TISSUE SPECIFICITY</scope>
    <scope>INDUCTION</scope>
    <source>
        <strain>cv. Columbia</strain>
    </source>
</reference>
<reference key="2">
    <citation type="journal article" date="2000" name="Plant J.">
        <title>Functional identification of an Arabidopsis Snf4 ortholog by screening for heterologous multicopy suppressors of snf4 deficiency in yeast.</title>
        <authorList>
            <person name="Kleinow T."/>
            <person name="Bhalerao R."/>
            <person name="Breuer F."/>
            <person name="Umeda M."/>
            <person name="Salchert K."/>
            <person name="Koncz C."/>
        </authorList>
    </citation>
    <scope>NUCLEOTIDE SEQUENCE [MRNA]</scope>
    <scope>FUNCTION</scope>
    <source>
        <strain>cv. Columbia</strain>
    </source>
</reference>
<reference key="3">
    <citation type="journal article" date="2000" name="DNA Res.">
        <title>Structural analysis of Arabidopsis thaliana chromosome 3. II. Sequence features of the 4,251,695 bp regions covered by 90 P1, TAC and BAC clones.</title>
        <authorList>
            <person name="Kaneko T."/>
            <person name="Katoh T."/>
            <person name="Sato S."/>
            <person name="Nakamura Y."/>
            <person name="Asamizu E."/>
            <person name="Tabata S."/>
        </authorList>
    </citation>
    <scope>NUCLEOTIDE SEQUENCE [LARGE SCALE GENOMIC DNA]</scope>
    <source>
        <strain>cv. Columbia</strain>
    </source>
</reference>
<reference key="4">
    <citation type="journal article" date="2017" name="Plant J.">
        <title>Araport11: a complete reannotation of the Arabidopsis thaliana reference genome.</title>
        <authorList>
            <person name="Cheng C.Y."/>
            <person name="Krishnakumar V."/>
            <person name="Chan A.P."/>
            <person name="Thibaud-Nissen F."/>
            <person name="Schobel S."/>
            <person name="Town C.D."/>
        </authorList>
    </citation>
    <scope>GENOME REANNOTATION</scope>
    <source>
        <strain>cv. Columbia</strain>
    </source>
</reference>
<reference key="5">
    <citation type="journal article" date="2003" name="Science">
        <title>Empirical analysis of transcriptional activity in the Arabidopsis genome.</title>
        <authorList>
            <person name="Yamada K."/>
            <person name="Lim J."/>
            <person name="Dale J.M."/>
            <person name="Chen H."/>
            <person name="Shinn P."/>
            <person name="Palm C.J."/>
            <person name="Southwick A.M."/>
            <person name="Wu H.C."/>
            <person name="Kim C.J."/>
            <person name="Nguyen M."/>
            <person name="Pham P.K."/>
            <person name="Cheuk R.F."/>
            <person name="Karlin-Newmann G."/>
            <person name="Liu S.X."/>
            <person name="Lam B."/>
            <person name="Sakano H."/>
            <person name="Wu T."/>
            <person name="Yu G."/>
            <person name="Miranda M."/>
            <person name="Quach H.L."/>
            <person name="Tripp M."/>
            <person name="Chang C.H."/>
            <person name="Lee J.M."/>
            <person name="Toriumi M.J."/>
            <person name="Chan M.M."/>
            <person name="Tang C.C."/>
            <person name="Onodera C.S."/>
            <person name="Deng J.M."/>
            <person name="Akiyama K."/>
            <person name="Ansari Y."/>
            <person name="Arakawa T."/>
            <person name="Banh J."/>
            <person name="Banno F."/>
            <person name="Bowser L."/>
            <person name="Brooks S.Y."/>
            <person name="Carninci P."/>
            <person name="Chao Q."/>
            <person name="Choy N."/>
            <person name="Enju A."/>
            <person name="Goldsmith A.D."/>
            <person name="Gurjal M."/>
            <person name="Hansen N.F."/>
            <person name="Hayashizaki Y."/>
            <person name="Johnson-Hopson C."/>
            <person name="Hsuan V.W."/>
            <person name="Iida K."/>
            <person name="Karnes M."/>
            <person name="Khan S."/>
            <person name="Koesema E."/>
            <person name="Ishida J."/>
            <person name="Jiang P.X."/>
            <person name="Jones T."/>
            <person name="Kawai J."/>
            <person name="Kamiya A."/>
            <person name="Meyers C."/>
            <person name="Nakajima M."/>
            <person name="Narusaka M."/>
            <person name="Seki M."/>
            <person name="Sakurai T."/>
            <person name="Satou M."/>
            <person name="Tamse R."/>
            <person name="Vaysberg M."/>
            <person name="Wallender E.K."/>
            <person name="Wong C."/>
            <person name="Yamamura Y."/>
            <person name="Yuan S."/>
            <person name="Shinozaki K."/>
            <person name="Davis R.W."/>
            <person name="Theologis A."/>
            <person name="Ecker J.R."/>
        </authorList>
    </citation>
    <scope>NUCLEOTIDE SEQUENCE [LARGE SCALE MRNA]</scope>
    <source>
        <strain>cv. Columbia</strain>
    </source>
</reference>
<reference key="6">
    <citation type="journal article" date="2004" name="Plant Physiol.">
        <title>Arabidopsis Cys2/His2-type zinc-finger proteins function as transcription repressors under drought, cold, and high-salinity stress conditions.</title>
        <authorList>
            <person name="Sakamoto H."/>
            <person name="Maruyama K."/>
            <person name="Sakuma Y."/>
            <person name="Meshi T."/>
            <person name="Iwabuchi M."/>
            <person name="Shinozaki K."/>
            <person name="Yamaguchi-Shinozaki K."/>
        </authorList>
    </citation>
    <scope>FUNCTION</scope>
    <scope>SUBCELLULAR LOCATION</scope>
    <scope>TISSUE SPECIFICITY</scope>
    <scope>INDUCTION</scope>
</reference>
<reference key="7">
    <citation type="journal article" date="2008" name="Proc. Natl. Acad. Sci. U.S.A.">
        <title>Mapping methyl jasmonate-mediated transcriptional reprogramming of metabolism and cell cycle progression in cultured Arabidopsis cells.</title>
        <authorList>
            <person name="Pauwels L."/>
            <person name="Morreel K."/>
            <person name="De Witte E."/>
            <person name="Lammertyn F."/>
            <person name="Van Montagu M."/>
            <person name="Boerjan W."/>
            <person name="Inze D."/>
            <person name="Goossens A."/>
        </authorList>
    </citation>
    <scope>FUNCTION</scope>
</reference>
<reference key="8">
    <citation type="journal article" date="2010" name="J. Plant Physiol.">
        <title>Arabidopsis zinc-finger protein 2 is a negative regulator of ABA signaling during seed germination.</title>
        <authorList>
            <person name="Drechsel G."/>
            <person name="Raab S."/>
            <person name="Hoth S."/>
        </authorList>
    </citation>
    <scope>FUNCTION</scope>
    <scope>TISSUE SPECIFICITY</scope>
    <scope>INDUCTION</scope>
    <scope>DISRUPTION PHENOTYPE</scope>
</reference>
<reference key="9">
    <citation type="journal article" date="2011" name="Plant Physiol.">
        <title>Arabidopsis Cys2/His2 zinc-finger proteins AZF1 and AZF2 negatively regulate abscisic acid-repressive and auxin-inducible genes under abiotic stress conditions.</title>
        <authorList>
            <person name="Kodaira K.S."/>
            <person name="Qin F."/>
            <person name="Tran L.S."/>
            <person name="Maruyama K."/>
            <person name="Kidokoro S."/>
            <person name="Fujita Y."/>
            <person name="Shinozaki K."/>
            <person name="Yamaguchi-Shinozaki K."/>
        </authorList>
    </citation>
    <scope>FUNCTION</scope>
    <scope>SUBCELLULAR LOCATION</scope>
    <scope>INDUCTION</scope>
</reference>
<reference key="10">
    <citation type="journal article" date="2012" name="J. Integr. Plant Biol.">
        <title>Gene network analysis and functional studies of senescence-associated genes reveal novel regulators of Arabidopsis leaf senescence.</title>
        <authorList>
            <person name="Li Z."/>
            <person name="Peng J."/>
            <person name="Wen X."/>
            <person name="Guo H."/>
        </authorList>
    </citation>
    <scope>FUNCTION</scope>
    <scope>DISRUPTION PHENOTYPE</scope>
</reference>
<dbReference type="EMBL" id="AB030730">
    <property type="protein sequence ID" value="BAA85107.1"/>
    <property type="molecule type" value="Genomic_DNA"/>
</dbReference>
<dbReference type="EMBL" id="AF250337">
    <property type="protein sequence ID" value="AAG10143.1"/>
    <property type="molecule type" value="mRNA"/>
</dbReference>
<dbReference type="EMBL" id="AP000417">
    <property type="protein sequence ID" value="BAB02542.1"/>
    <property type="molecule type" value="Genomic_DNA"/>
</dbReference>
<dbReference type="EMBL" id="CP002686">
    <property type="protein sequence ID" value="AEE76261.1"/>
    <property type="molecule type" value="Genomic_DNA"/>
</dbReference>
<dbReference type="EMBL" id="CP002686">
    <property type="protein sequence ID" value="AEE76262.1"/>
    <property type="molecule type" value="Genomic_DNA"/>
</dbReference>
<dbReference type="EMBL" id="BT003816">
    <property type="protein sequence ID" value="AAO41869.1"/>
    <property type="molecule type" value="mRNA"/>
</dbReference>
<dbReference type="PIR" id="T52385">
    <property type="entry name" value="T52385"/>
</dbReference>
<dbReference type="RefSeq" id="NP_001118663.1">
    <property type="nucleotide sequence ID" value="NM_001125191.1"/>
</dbReference>
<dbReference type="RefSeq" id="NP_188592.1">
    <property type="nucleotide sequence ID" value="NM_112848.2"/>
</dbReference>
<dbReference type="BioGRID" id="6828">
    <property type="interactions" value="1"/>
</dbReference>
<dbReference type="FunCoup" id="Q9SSW2">
    <property type="interactions" value="1"/>
</dbReference>
<dbReference type="STRING" id="3702.Q9SSW2"/>
<dbReference type="PaxDb" id="3702-AT3G19580.1"/>
<dbReference type="ProteomicsDB" id="241166"/>
<dbReference type="EnsemblPlants" id="AT3G19580.1">
    <property type="protein sequence ID" value="AT3G19580.1"/>
    <property type="gene ID" value="AT3G19580"/>
</dbReference>
<dbReference type="EnsemblPlants" id="AT3G19580.2">
    <property type="protein sequence ID" value="AT3G19580.2"/>
    <property type="gene ID" value="AT3G19580"/>
</dbReference>
<dbReference type="GeneID" id="821495"/>
<dbReference type="Gramene" id="AT3G19580.1">
    <property type="protein sequence ID" value="AT3G19580.1"/>
    <property type="gene ID" value="AT3G19580"/>
</dbReference>
<dbReference type="Gramene" id="AT3G19580.2">
    <property type="protein sequence ID" value="AT3G19580.2"/>
    <property type="gene ID" value="AT3G19580"/>
</dbReference>
<dbReference type="KEGG" id="ath:AT3G19580"/>
<dbReference type="Araport" id="AT3G19580"/>
<dbReference type="TAIR" id="AT3G19580">
    <property type="gene designation" value="ZF2"/>
</dbReference>
<dbReference type="eggNOG" id="KOG1721">
    <property type="taxonomic scope" value="Eukaryota"/>
</dbReference>
<dbReference type="HOGENOM" id="CLU_059471_1_2_1"/>
<dbReference type="InParanoid" id="Q9SSW2"/>
<dbReference type="OMA" id="DHDQVIK"/>
<dbReference type="OrthoDB" id="40579at2759"/>
<dbReference type="PhylomeDB" id="Q9SSW2"/>
<dbReference type="PRO" id="PR:Q9SSW2"/>
<dbReference type="Proteomes" id="UP000006548">
    <property type="component" value="Chromosome 3"/>
</dbReference>
<dbReference type="ExpressionAtlas" id="Q9SSW2">
    <property type="expression patterns" value="baseline and differential"/>
</dbReference>
<dbReference type="GO" id="GO:0005634">
    <property type="term" value="C:nucleus"/>
    <property type="evidence" value="ECO:0000314"/>
    <property type="project" value="TAIR"/>
</dbReference>
<dbReference type="GO" id="GO:0003677">
    <property type="term" value="F:DNA binding"/>
    <property type="evidence" value="ECO:0000250"/>
    <property type="project" value="TAIR"/>
</dbReference>
<dbReference type="GO" id="GO:0003700">
    <property type="term" value="F:DNA-binding transcription factor activity"/>
    <property type="evidence" value="ECO:0000250"/>
    <property type="project" value="TAIR"/>
</dbReference>
<dbReference type="GO" id="GO:0043565">
    <property type="term" value="F:sequence-specific DNA binding"/>
    <property type="evidence" value="ECO:0000314"/>
    <property type="project" value="TAIR"/>
</dbReference>
<dbReference type="GO" id="GO:0000976">
    <property type="term" value="F:transcription cis-regulatory region binding"/>
    <property type="evidence" value="ECO:0000353"/>
    <property type="project" value="TAIR"/>
</dbReference>
<dbReference type="GO" id="GO:0008270">
    <property type="term" value="F:zinc ion binding"/>
    <property type="evidence" value="ECO:0007669"/>
    <property type="project" value="UniProtKB-KW"/>
</dbReference>
<dbReference type="GO" id="GO:0009738">
    <property type="term" value="P:abscisic acid-activated signaling pathway"/>
    <property type="evidence" value="ECO:0007669"/>
    <property type="project" value="UniProtKB-KW"/>
</dbReference>
<dbReference type="GO" id="GO:0009793">
    <property type="term" value="P:embryo development ending in seed dormancy"/>
    <property type="evidence" value="ECO:0000270"/>
    <property type="project" value="TAIR"/>
</dbReference>
<dbReference type="GO" id="GO:0042538">
    <property type="term" value="P:hyperosmotic salinity response"/>
    <property type="evidence" value="ECO:0000270"/>
    <property type="project" value="TAIR"/>
</dbReference>
<dbReference type="GO" id="GO:0045892">
    <property type="term" value="P:negative regulation of DNA-templated transcription"/>
    <property type="evidence" value="ECO:0000314"/>
    <property type="project" value="TAIR"/>
</dbReference>
<dbReference type="GO" id="GO:0009737">
    <property type="term" value="P:response to abscisic acid"/>
    <property type="evidence" value="ECO:0000315"/>
    <property type="project" value="UniProtKB"/>
</dbReference>
<dbReference type="GO" id="GO:0009414">
    <property type="term" value="P:response to water deprivation"/>
    <property type="evidence" value="ECO:0000270"/>
    <property type="project" value="TAIR"/>
</dbReference>
<dbReference type="FunFam" id="3.30.160.60:FF:003692">
    <property type="entry name" value="Zinc finger protein ZAT10"/>
    <property type="match status" value="1"/>
</dbReference>
<dbReference type="Gene3D" id="3.30.160.60">
    <property type="entry name" value="Classic Zinc Finger"/>
    <property type="match status" value="1"/>
</dbReference>
<dbReference type="InterPro" id="IPR044653">
    <property type="entry name" value="AZF1/2/3-like"/>
</dbReference>
<dbReference type="InterPro" id="IPR036236">
    <property type="entry name" value="Znf_C2H2_sf"/>
</dbReference>
<dbReference type="InterPro" id="IPR013087">
    <property type="entry name" value="Znf_C2H2_type"/>
</dbReference>
<dbReference type="PANTHER" id="PTHR45988">
    <property type="entry name" value="C2H2 TYPE ZINC FINGER TRANSCRIPTION FACTOR FAMILY-RELATED"/>
    <property type="match status" value="1"/>
</dbReference>
<dbReference type="PANTHER" id="PTHR45988:SF1">
    <property type="entry name" value="ZINC FINGER PROTEIN AZF2"/>
    <property type="match status" value="1"/>
</dbReference>
<dbReference type="Pfam" id="PF13912">
    <property type="entry name" value="zf-C2H2_6"/>
    <property type="match status" value="2"/>
</dbReference>
<dbReference type="SMART" id="SM00355">
    <property type="entry name" value="ZnF_C2H2"/>
    <property type="match status" value="2"/>
</dbReference>
<dbReference type="SUPFAM" id="SSF57667">
    <property type="entry name" value="beta-beta-alpha zinc fingers"/>
    <property type="match status" value="1"/>
</dbReference>
<dbReference type="PROSITE" id="PS00028">
    <property type="entry name" value="ZINC_FINGER_C2H2_1"/>
    <property type="match status" value="2"/>
</dbReference>
<dbReference type="PROSITE" id="PS50157">
    <property type="entry name" value="ZINC_FINGER_C2H2_2"/>
    <property type="match status" value="2"/>
</dbReference>
<keyword id="KW-0938">Abscisic acid signaling pathway</keyword>
<keyword id="KW-0238">DNA-binding</keyword>
<keyword id="KW-1184">Jasmonic acid signaling pathway</keyword>
<keyword id="KW-0479">Metal-binding</keyword>
<keyword id="KW-0539">Nucleus</keyword>
<keyword id="KW-1185">Reference proteome</keyword>
<keyword id="KW-0677">Repeat</keyword>
<keyword id="KW-0678">Repressor</keyword>
<keyword id="KW-0804">Transcription</keyword>
<keyword id="KW-0805">Transcription regulation</keyword>
<keyword id="KW-0862">Zinc</keyword>
<keyword id="KW-0863">Zinc-finger</keyword>
<name>AZF2_ARATH</name>
<sequence length="273" mass="29796">MALEAMNTPTSSFTRIETKEDLMNDAVFIEPWLKRKRSKRQRSHSPSSSSSSPPRSRPKSQNQDLTEEEYLALCLLMLAKDQPSQTRFHQQSQSLTPPPESKNLPYKCNVCEKAFPSYQALGGHKASHRIKPPTVISTTADDSTAPTISIVAGEKHPIAASGKIHECSICHKVFPTGQALGGHKRCHYEGNLGGGGGGGSKSISHSGSVSSTVSEERSHRGFIDLNLPALPELSLHHNPIVDEEILSPLTGKKPLLLTDHDQVIKKEDLSLKI</sequence>
<gene>
    <name type="primary">AZF2</name>
    <name type="synonym">ZF2</name>
    <name type="ordered locus">At3g19580</name>
    <name type="ORF">MMB12.27</name>
    <name type="ORF">MMB12.4</name>
</gene>